<gene>
    <name evidence="1" type="primary">metK</name>
    <name type="ordered locus">GK2849</name>
</gene>
<organism>
    <name type="scientific">Geobacillus kaustophilus (strain HTA426)</name>
    <dbReference type="NCBI Taxonomy" id="235909"/>
    <lineage>
        <taxon>Bacteria</taxon>
        <taxon>Bacillati</taxon>
        <taxon>Bacillota</taxon>
        <taxon>Bacilli</taxon>
        <taxon>Bacillales</taxon>
        <taxon>Anoxybacillaceae</taxon>
        <taxon>Geobacillus</taxon>
        <taxon>Geobacillus thermoleovorans group</taxon>
    </lineage>
</organism>
<comment type="function">
    <text evidence="1">Catalyzes the formation of S-adenosylmethionine (AdoMet) from methionine and ATP. The overall synthetic reaction is composed of two sequential steps, AdoMet formation and the subsequent tripolyphosphate hydrolysis which occurs prior to release of AdoMet from the enzyme.</text>
</comment>
<comment type="catalytic activity">
    <reaction evidence="1">
        <text>L-methionine + ATP + H2O = S-adenosyl-L-methionine + phosphate + diphosphate</text>
        <dbReference type="Rhea" id="RHEA:21080"/>
        <dbReference type="ChEBI" id="CHEBI:15377"/>
        <dbReference type="ChEBI" id="CHEBI:30616"/>
        <dbReference type="ChEBI" id="CHEBI:33019"/>
        <dbReference type="ChEBI" id="CHEBI:43474"/>
        <dbReference type="ChEBI" id="CHEBI:57844"/>
        <dbReference type="ChEBI" id="CHEBI:59789"/>
        <dbReference type="EC" id="2.5.1.6"/>
    </reaction>
</comment>
<comment type="cofactor">
    <cofactor evidence="1">
        <name>Mg(2+)</name>
        <dbReference type="ChEBI" id="CHEBI:18420"/>
    </cofactor>
    <text evidence="1">Binds 2 divalent ions per subunit.</text>
</comment>
<comment type="cofactor">
    <cofactor evidence="1">
        <name>K(+)</name>
        <dbReference type="ChEBI" id="CHEBI:29103"/>
    </cofactor>
    <text evidence="1">Binds 1 potassium ion per subunit.</text>
</comment>
<comment type="pathway">
    <text evidence="1">Amino-acid biosynthesis; S-adenosyl-L-methionine biosynthesis; S-adenosyl-L-methionine from L-methionine: step 1/1.</text>
</comment>
<comment type="subunit">
    <text evidence="1">Homotetramer; dimer of dimers.</text>
</comment>
<comment type="subcellular location">
    <subcellularLocation>
        <location evidence="1">Cytoplasm</location>
    </subcellularLocation>
</comment>
<comment type="similarity">
    <text evidence="1">Belongs to the AdoMet synthase family.</text>
</comment>
<name>METK_GEOKA</name>
<evidence type="ECO:0000255" key="1">
    <source>
        <dbReference type="HAMAP-Rule" id="MF_00086"/>
    </source>
</evidence>
<keyword id="KW-0067">ATP-binding</keyword>
<keyword id="KW-0963">Cytoplasm</keyword>
<keyword id="KW-0460">Magnesium</keyword>
<keyword id="KW-0479">Metal-binding</keyword>
<keyword id="KW-0547">Nucleotide-binding</keyword>
<keyword id="KW-0554">One-carbon metabolism</keyword>
<keyword id="KW-0630">Potassium</keyword>
<keyword id="KW-1185">Reference proteome</keyword>
<keyword id="KW-0808">Transferase</keyword>
<reference key="1">
    <citation type="journal article" date="2004" name="Nucleic Acids Res.">
        <title>Thermoadaptation trait revealed by the genome sequence of thermophilic Geobacillus kaustophilus.</title>
        <authorList>
            <person name="Takami H."/>
            <person name="Takaki Y."/>
            <person name="Chee G.-J."/>
            <person name="Nishi S."/>
            <person name="Shimamura S."/>
            <person name="Suzuki H."/>
            <person name="Matsui S."/>
            <person name="Uchiyama I."/>
        </authorList>
    </citation>
    <scope>NUCLEOTIDE SEQUENCE [LARGE SCALE GENOMIC DNA]</scope>
    <source>
        <strain>HTA426</strain>
    </source>
</reference>
<accession>Q5KW02</accession>
<feature type="chain" id="PRO_0000174525" description="S-adenosylmethionine synthase">
    <location>
        <begin position="1"/>
        <end position="403"/>
    </location>
</feature>
<feature type="region of interest" description="Flexible loop" evidence="1">
    <location>
        <begin position="101"/>
        <end position="111"/>
    </location>
</feature>
<feature type="binding site" description="in other chain" evidence="1">
    <location>
        <position position="17"/>
    </location>
    <ligand>
        <name>ATP</name>
        <dbReference type="ChEBI" id="CHEBI:30616"/>
        <note>ligand shared between two neighboring subunits</note>
    </ligand>
</feature>
<feature type="binding site" evidence="1">
    <location>
        <position position="19"/>
    </location>
    <ligand>
        <name>Mg(2+)</name>
        <dbReference type="ChEBI" id="CHEBI:18420"/>
    </ligand>
</feature>
<feature type="binding site" evidence="1">
    <location>
        <position position="45"/>
    </location>
    <ligand>
        <name>K(+)</name>
        <dbReference type="ChEBI" id="CHEBI:29103"/>
    </ligand>
</feature>
<feature type="binding site" description="in other chain" evidence="1">
    <location>
        <position position="58"/>
    </location>
    <ligand>
        <name>L-methionine</name>
        <dbReference type="ChEBI" id="CHEBI:57844"/>
        <note>ligand shared between two neighboring subunits</note>
    </ligand>
</feature>
<feature type="binding site" description="in other chain" evidence="1">
    <location>
        <position position="101"/>
    </location>
    <ligand>
        <name>L-methionine</name>
        <dbReference type="ChEBI" id="CHEBI:57844"/>
        <note>ligand shared between two neighboring subunits</note>
    </ligand>
</feature>
<feature type="binding site" description="in other chain" evidence="1">
    <location>
        <begin position="177"/>
        <end position="179"/>
    </location>
    <ligand>
        <name>ATP</name>
        <dbReference type="ChEBI" id="CHEBI:30616"/>
        <note>ligand shared between two neighboring subunits</note>
    </ligand>
</feature>
<feature type="binding site" description="in other chain" evidence="1">
    <location>
        <begin position="244"/>
        <end position="245"/>
    </location>
    <ligand>
        <name>ATP</name>
        <dbReference type="ChEBI" id="CHEBI:30616"/>
        <note>ligand shared between two neighboring subunits</note>
    </ligand>
</feature>
<feature type="binding site" evidence="1">
    <location>
        <position position="253"/>
    </location>
    <ligand>
        <name>ATP</name>
        <dbReference type="ChEBI" id="CHEBI:30616"/>
        <note>ligand shared between two neighboring subunits</note>
    </ligand>
</feature>
<feature type="binding site" evidence="1">
    <location>
        <position position="253"/>
    </location>
    <ligand>
        <name>L-methionine</name>
        <dbReference type="ChEBI" id="CHEBI:57844"/>
        <note>ligand shared between two neighboring subunits</note>
    </ligand>
</feature>
<feature type="binding site" description="in other chain" evidence="1">
    <location>
        <begin position="259"/>
        <end position="260"/>
    </location>
    <ligand>
        <name>ATP</name>
        <dbReference type="ChEBI" id="CHEBI:30616"/>
        <note>ligand shared between two neighboring subunits</note>
    </ligand>
</feature>
<feature type="binding site" evidence="1">
    <location>
        <position position="276"/>
    </location>
    <ligand>
        <name>ATP</name>
        <dbReference type="ChEBI" id="CHEBI:30616"/>
        <note>ligand shared between two neighboring subunits</note>
    </ligand>
</feature>
<feature type="binding site" evidence="1">
    <location>
        <position position="280"/>
    </location>
    <ligand>
        <name>ATP</name>
        <dbReference type="ChEBI" id="CHEBI:30616"/>
        <note>ligand shared between two neighboring subunits</note>
    </ligand>
</feature>
<feature type="binding site" description="in other chain" evidence="1">
    <location>
        <position position="284"/>
    </location>
    <ligand>
        <name>L-methionine</name>
        <dbReference type="ChEBI" id="CHEBI:57844"/>
        <note>ligand shared between two neighboring subunits</note>
    </ligand>
</feature>
<protein>
    <recommendedName>
        <fullName evidence="1">S-adenosylmethionine synthase</fullName>
        <shortName evidence="1">AdoMet synthase</shortName>
        <ecNumber evidence="1">2.5.1.6</ecNumber>
    </recommendedName>
    <alternativeName>
        <fullName evidence="1">MAT</fullName>
    </alternativeName>
    <alternativeName>
        <fullName evidence="1">Methionine adenosyltransferase</fullName>
    </alternativeName>
</protein>
<proteinExistence type="inferred from homology"/>
<sequence length="403" mass="44125">MSAKRRLFTSESVTEGHPDKICDQISDAILDAILEKDPNARVACETSVTTGLVLVSGEITTSTYVDIPRIVRDTVREIGYTRAKYGFDADTCAVLTSIDEQSPDIAMGVDRALEAREGQMTDEEIEAIGAGDQGLMFGFACNETEELMPMPISLAHRLARRLAEVRKTDVLPYLRPDGKTQVTIEYDENGKPVRVDTIVVSAQHHPEITQEQIQRDIKEQVIKPVVPAELLDENTKYFINPTGRFVIGGPQGDAGLTGRKIIVDTYGGYARHGGGAFSGKDPTKVDRSAAYAARYVAKNIVAAGLADKCEVQLAYAIGVARPVSISIDTFGTGKVSEDILIEVVRNNFDLRPAGIIKMLDLRRPIYKQTAAYGHFGRTDIDLPWERTDKAALLKEQALALADK</sequence>
<dbReference type="EC" id="2.5.1.6" evidence="1"/>
<dbReference type="EMBL" id="BA000043">
    <property type="protein sequence ID" value="BAD77134.1"/>
    <property type="molecule type" value="Genomic_DNA"/>
</dbReference>
<dbReference type="RefSeq" id="WP_011232321.1">
    <property type="nucleotide sequence ID" value="NC_006510.1"/>
</dbReference>
<dbReference type="SMR" id="Q5KW02"/>
<dbReference type="STRING" id="235909.GK2849"/>
<dbReference type="KEGG" id="gka:GK2849"/>
<dbReference type="eggNOG" id="COG0192">
    <property type="taxonomic scope" value="Bacteria"/>
</dbReference>
<dbReference type="HOGENOM" id="CLU_041802_1_1_9"/>
<dbReference type="UniPathway" id="UPA00315">
    <property type="reaction ID" value="UER00080"/>
</dbReference>
<dbReference type="Proteomes" id="UP000001172">
    <property type="component" value="Chromosome"/>
</dbReference>
<dbReference type="GO" id="GO:0005737">
    <property type="term" value="C:cytoplasm"/>
    <property type="evidence" value="ECO:0007669"/>
    <property type="project" value="UniProtKB-SubCell"/>
</dbReference>
<dbReference type="GO" id="GO:0005524">
    <property type="term" value="F:ATP binding"/>
    <property type="evidence" value="ECO:0007669"/>
    <property type="project" value="UniProtKB-UniRule"/>
</dbReference>
<dbReference type="GO" id="GO:0000287">
    <property type="term" value="F:magnesium ion binding"/>
    <property type="evidence" value="ECO:0007669"/>
    <property type="project" value="UniProtKB-UniRule"/>
</dbReference>
<dbReference type="GO" id="GO:0004478">
    <property type="term" value="F:methionine adenosyltransferase activity"/>
    <property type="evidence" value="ECO:0007669"/>
    <property type="project" value="UniProtKB-UniRule"/>
</dbReference>
<dbReference type="GO" id="GO:0006730">
    <property type="term" value="P:one-carbon metabolic process"/>
    <property type="evidence" value="ECO:0007669"/>
    <property type="project" value="UniProtKB-KW"/>
</dbReference>
<dbReference type="GO" id="GO:0006556">
    <property type="term" value="P:S-adenosylmethionine biosynthetic process"/>
    <property type="evidence" value="ECO:0007669"/>
    <property type="project" value="UniProtKB-UniRule"/>
</dbReference>
<dbReference type="CDD" id="cd18079">
    <property type="entry name" value="S-AdoMet_synt"/>
    <property type="match status" value="1"/>
</dbReference>
<dbReference type="FunFam" id="3.30.300.10:FF:000003">
    <property type="entry name" value="S-adenosylmethionine synthase"/>
    <property type="match status" value="1"/>
</dbReference>
<dbReference type="FunFam" id="3.30.300.10:FF:000004">
    <property type="entry name" value="S-adenosylmethionine synthase"/>
    <property type="match status" value="1"/>
</dbReference>
<dbReference type="Gene3D" id="3.30.300.10">
    <property type="match status" value="3"/>
</dbReference>
<dbReference type="HAMAP" id="MF_00086">
    <property type="entry name" value="S_AdoMet_synth1"/>
    <property type="match status" value="1"/>
</dbReference>
<dbReference type="InterPro" id="IPR022631">
    <property type="entry name" value="ADOMET_SYNTHASE_CS"/>
</dbReference>
<dbReference type="InterPro" id="IPR022630">
    <property type="entry name" value="S-AdoMet_synt_C"/>
</dbReference>
<dbReference type="InterPro" id="IPR022629">
    <property type="entry name" value="S-AdoMet_synt_central"/>
</dbReference>
<dbReference type="InterPro" id="IPR022628">
    <property type="entry name" value="S-AdoMet_synt_N"/>
</dbReference>
<dbReference type="InterPro" id="IPR002133">
    <property type="entry name" value="S-AdoMet_synthetase"/>
</dbReference>
<dbReference type="InterPro" id="IPR022636">
    <property type="entry name" value="S-AdoMet_synthetase_sfam"/>
</dbReference>
<dbReference type="NCBIfam" id="TIGR01034">
    <property type="entry name" value="metK"/>
    <property type="match status" value="1"/>
</dbReference>
<dbReference type="PANTHER" id="PTHR11964">
    <property type="entry name" value="S-ADENOSYLMETHIONINE SYNTHETASE"/>
    <property type="match status" value="1"/>
</dbReference>
<dbReference type="Pfam" id="PF02773">
    <property type="entry name" value="S-AdoMet_synt_C"/>
    <property type="match status" value="1"/>
</dbReference>
<dbReference type="Pfam" id="PF02772">
    <property type="entry name" value="S-AdoMet_synt_M"/>
    <property type="match status" value="1"/>
</dbReference>
<dbReference type="Pfam" id="PF00438">
    <property type="entry name" value="S-AdoMet_synt_N"/>
    <property type="match status" value="1"/>
</dbReference>
<dbReference type="PIRSF" id="PIRSF000497">
    <property type="entry name" value="MAT"/>
    <property type="match status" value="1"/>
</dbReference>
<dbReference type="SUPFAM" id="SSF55973">
    <property type="entry name" value="S-adenosylmethionine synthetase"/>
    <property type="match status" value="3"/>
</dbReference>
<dbReference type="PROSITE" id="PS00376">
    <property type="entry name" value="ADOMET_SYNTHASE_1"/>
    <property type="match status" value="1"/>
</dbReference>
<dbReference type="PROSITE" id="PS00377">
    <property type="entry name" value="ADOMET_SYNTHASE_2"/>
    <property type="match status" value="1"/>
</dbReference>